<comment type="function">
    <text evidence="1">Methylates ribosomal protein L11.</text>
</comment>
<comment type="catalytic activity">
    <reaction evidence="1">
        <text>L-lysyl-[protein] + 3 S-adenosyl-L-methionine = N(6),N(6),N(6)-trimethyl-L-lysyl-[protein] + 3 S-adenosyl-L-homocysteine + 3 H(+)</text>
        <dbReference type="Rhea" id="RHEA:54192"/>
        <dbReference type="Rhea" id="RHEA-COMP:9752"/>
        <dbReference type="Rhea" id="RHEA-COMP:13826"/>
        <dbReference type="ChEBI" id="CHEBI:15378"/>
        <dbReference type="ChEBI" id="CHEBI:29969"/>
        <dbReference type="ChEBI" id="CHEBI:57856"/>
        <dbReference type="ChEBI" id="CHEBI:59789"/>
        <dbReference type="ChEBI" id="CHEBI:61961"/>
    </reaction>
</comment>
<comment type="subcellular location">
    <subcellularLocation>
        <location evidence="1">Cytoplasm</location>
    </subcellularLocation>
</comment>
<comment type="similarity">
    <text evidence="1">Belongs to the methyltransferase superfamily. PrmA family.</text>
</comment>
<name>PRMA_CAUSK</name>
<gene>
    <name evidence="1" type="primary">prmA</name>
    <name type="ordered locus">Caul_1594</name>
</gene>
<accession>B0T1G7</accession>
<organism>
    <name type="scientific">Caulobacter sp. (strain K31)</name>
    <dbReference type="NCBI Taxonomy" id="366602"/>
    <lineage>
        <taxon>Bacteria</taxon>
        <taxon>Pseudomonadati</taxon>
        <taxon>Pseudomonadota</taxon>
        <taxon>Alphaproteobacteria</taxon>
        <taxon>Caulobacterales</taxon>
        <taxon>Caulobacteraceae</taxon>
        <taxon>Caulobacter</taxon>
    </lineage>
</organism>
<feature type="chain" id="PRO_1000192599" description="Ribosomal protein L11 methyltransferase">
    <location>
        <begin position="1"/>
        <end position="288"/>
    </location>
</feature>
<feature type="binding site" evidence="1">
    <location>
        <position position="134"/>
    </location>
    <ligand>
        <name>S-adenosyl-L-methionine</name>
        <dbReference type="ChEBI" id="CHEBI:59789"/>
    </ligand>
</feature>
<feature type="binding site" evidence="1">
    <location>
        <position position="157"/>
    </location>
    <ligand>
        <name>S-adenosyl-L-methionine</name>
        <dbReference type="ChEBI" id="CHEBI:59789"/>
    </ligand>
</feature>
<feature type="binding site" evidence="1">
    <location>
        <position position="179"/>
    </location>
    <ligand>
        <name>S-adenosyl-L-methionine</name>
        <dbReference type="ChEBI" id="CHEBI:59789"/>
    </ligand>
</feature>
<feature type="binding site" evidence="1">
    <location>
        <position position="224"/>
    </location>
    <ligand>
        <name>S-adenosyl-L-methionine</name>
        <dbReference type="ChEBI" id="CHEBI:59789"/>
    </ligand>
</feature>
<dbReference type="EC" id="2.1.1.-" evidence="1"/>
<dbReference type="EMBL" id="CP000927">
    <property type="protein sequence ID" value="ABZ70724.1"/>
    <property type="molecule type" value="Genomic_DNA"/>
</dbReference>
<dbReference type="SMR" id="B0T1G7"/>
<dbReference type="STRING" id="366602.Caul_1594"/>
<dbReference type="KEGG" id="cak:Caul_1594"/>
<dbReference type="eggNOG" id="COG2264">
    <property type="taxonomic scope" value="Bacteria"/>
</dbReference>
<dbReference type="HOGENOM" id="CLU_049382_3_0_5"/>
<dbReference type="OrthoDB" id="9785995at2"/>
<dbReference type="GO" id="GO:0005737">
    <property type="term" value="C:cytoplasm"/>
    <property type="evidence" value="ECO:0007669"/>
    <property type="project" value="UniProtKB-SubCell"/>
</dbReference>
<dbReference type="GO" id="GO:0016279">
    <property type="term" value="F:protein-lysine N-methyltransferase activity"/>
    <property type="evidence" value="ECO:0007669"/>
    <property type="project" value="RHEA"/>
</dbReference>
<dbReference type="GO" id="GO:0032259">
    <property type="term" value="P:methylation"/>
    <property type="evidence" value="ECO:0007669"/>
    <property type="project" value="UniProtKB-KW"/>
</dbReference>
<dbReference type="CDD" id="cd02440">
    <property type="entry name" value="AdoMet_MTases"/>
    <property type="match status" value="1"/>
</dbReference>
<dbReference type="Gene3D" id="3.40.50.150">
    <property type="entry name" value="Vaccinia Virus protein VP39"/>
    <property type="match status" value="1"/>
</dbReference>
<dbReference type="HAMAP" id="MF_00735">
    <property type="entry name" value="Methyltr_PrmA"/>
    <property type="match status" value="1"/>
</dbReference>
<dbReference type="InterPro" id="IPR050078">
    <property type="entry name" value="Ribosomal_L11_MeTrfase_PrmA"/>
</dbReference>
<dbReference type="InterPro" id="IPR004498">
    <property type="entry name" value="Ribosomal_PrmA_MeTrfase"/>
</dbReference>
<dbReference type="InterPro" id="IPR029063">
    <property type="entry name" value="SAM-dependent_MTases_sf"/>
</dbReference>
<dbReference type="PANTHER" id="PTHR43648">
    <property type="entry name" value="ELECTRON TRANSFER FLAVOPROTEIN BETA SUBUNIT LYSINE METHYLTRANSFERASE"/>
    <property type="match status" value="1"/>
</dbReference>
<dbReference type="PANTHER" id="PTHR43648:SF1">
    <property type="entry name" value="ELECTRON TRANSFER FLAVOPROTEIN BETA SUBUNIT LYSINE METHYLTRANSFERASE"/>
    <property type="match status" value="1"/>
</dbReference>
<dbReference type="Pfam" id="PF06325">
    <property type="entry name" value="PrmA"/>
    <property type="match status" value="1"/>
</dbReference>
<dbReference type="SUPFAM" id="SSF53335">
    <property type="entry name" value="S-adenosyl-L-methionine-dependent methyltransferases"/>
    <property type="match status" value="1"/>
</dbReference>
<proteinExistence type="inferred from homology"/>
<evidence type="ECO:0000255" key="1">
    <source>
        <dbReference type="HAMAP-Rule" id="MF_00735"/>
    </source>
</evidence>
<protein>
    <recommendedName>
        <fullName evidence="1">Ribosomal protein L11 methyltransferase</fullName>
        <shortName evidence="1">L11 Mtase</shortName>
        <ecNumber evidence="1">2.1.1.-</ecNumber>
    </recommendedName>
</protein>
<reference key="1">
    <citation type="submission" date="2008-01" db="EMBL/GenBank/DDBJ databases">
        <title>Complete sequence of chromosome of Caulobacter sp. K31.</title>
        <authorList>
            <consortium name="US DOE Joint Genome Institute"/>
            <person name="Copeland A."/>
            <person name="Lucas S."/>
            <person name="Lapidus A."/>
            <person name="Barry K."/>
            <person name="Glavina del Rio T."/>
            <person name="Dalin E."/>
            <person name="Tice H."/>
            <person name="Pitluck S."/>
            <person name="Bruce D."/>
            <person name="Goodwin L."/>
            <person name="Thompson L.S."/>
            <person name="Brettin T."/>
            <person name="Detter J.C."/>
            <person name="Han C."/>
            <person name="Schmutz J."/>
            <person name="Larimer F."/>
            <person name="Land M."/>
            <person name="Hauser L."/>
            <person name="Kyrpides N."/>
            <person name="Kim E."/>
            <person name="Stephens C."/>
            <person name="Richardson P."/>
        </authorList>
    </citation>
    <scope>NUCLEOTIDE SEQUENCE [LARGE SCALE GENOMIC DNA]</scope>
    <source>
        <strain>K31</strain>
    </source>
</reference>
<keyword id="KW-0963">Cytoplasm</keyword>
<keyword id="KW-0489">Methyltransferase</keyword>
<keyword id="KW-0949">S-adenosyl-L-methionine</keyword>
<keyword id="KW-0808">Transferase</keyword>
<sequence>MTDYTPQQIVARGARADAEAAADAIDNHPGLEGATYSILEEDEDKGLWRIDAFPTTDEEDAGLLEVLAGYPLKVVRETLADADWLAMALSGLPPVRAGRFFVYGMHDRGRLPASTVNLRIEAGAAFGTGHHGTTVGCLMAYDKLIKARKFKKVLDVGAGTGLLAIAAARTGSRIAVGTDIDRPSVRISKENAKVNRANAKFVHASGLGHRLVTDNAPYDLVFANILARPLISLAQDIKTALVPGGTVILSGLLRTQERMVKAAYVSRGFKVVNRIHRDAWAALVLQRP</sequence>